<protein>
    <recommendedName>
        <fullName>Protein CHUP1, chloroplastic</fullName>
    </recommendedName>
    <alternativeName>
        <fullName>Protein CHLOROPLAST UNUSUAL POSITIONING 1</fullName>
    </alternativeName>
</protein>
<sequence length="1004" mass="111912">MFVRIGFVVAASIAAVTVKRLNVKPSKPSKPSDNGEGGDKEQSVDPDYNLNDKNLQEEEEEEEEEVKLINSVINQTRGSFSDYLDDDILPEFEDLLSGEIEYPLPDDDNNLEKAEKERKYEVEMAYNDGELERLKQLVKELEEREVKLEGELLEYYGLKEQESDIVELQRQLKIKTVEIDMLNITINSLQAERKKLQEELSQNGIVRKELEVARNKIKELQRQIQLDANQTKGQLLLLKQHVSSLQMKEEEAMNKDTEVERKLKAVQDLEVQVMELKRKNRELQHEKRELSIKLDSAEARIATLSNMTESDKVAKVREEVNNLKHNNEDLLKQVEGLQMNRFSEVEELVYLRWVNACLRYELRNYQTPAGKISARDLSKNLSPKSQAKAKRLMLEYAGSERGQGDTDLESNYSQPSSPGSDDFDNASMDSSTSRFSSFSKKPGLIQKLKKWGKSKDDSSVQSSPSRSFYGGSPGRLSSSMNKQRGPLESLMIRNAGESVAITTFGQVDQESPGTPETPNLPRIRTQQQASSPGEGLNSVAASFHVMSKSVDNVLDEKYPAYKDRHKLAVEREKHIKHKADQARAERFGGNVALPPKLAQLKEKRVVVPSVITATGDQSNESNESNEGKASENAATVTKMKLVDIEKRPPRVPRPPPRSAGGGKSTNLPSARPPLPGGGPPPPPPPPGGGPPPPPGGGPPPPPPPPGALGRGAGGGNKVHRAPELVEFYQSLMKRESKKEGAPSLISSGTGNSSAARNNMIGEIENRSTFLLAVKADVETQGDFVQSLATEVRASSFTDIEDLLAFVSWLDEELSFLVDERAVLKHFDWPEGKADALREAAFEYQDLMKLEKQVTSFVDDPNLSCEPALKKMYKLLEKVEQSVYALLRTRDMAISRYKEFGIPVDWLSDTGVVGKIKLSSVQLAKKYMKRVAYELDSVSGSDKDPNREFLLLQGVRFAFRVHQFAGGFDAESMKAFEELRSRAKTESGDNNNNNNNNSNEEESVN</sequence>
<proteinExistence type="evidence at protein level"/>
<evidence type="ECO:0000255" key="1"/>
<evidence type="ECO:0000256" key="2">
    <source>
        <dbReference type="SAM" id="MobiDB-lite"/>
    </source>
</evidence>
<evidence type="ECO:0000269" key="3">
    <source>
    </source>
</evidence>
<evidence type="ECO:0000269" key="4">
    <source>
    </source>
</evidence>
<evidence type="ECO:0000269" key="5">
    <source>
    </source>
</evidence>
<evidence type="ECO:0000269" key="6">
    <source>
    </source>
</evidence>
<evidence type="ECO:0000269" key="7">
    <source>
    </source>
</evidence>
<evidence type="ECO:0007744" key="8">
    <source>
    </source>
</evidence>
<evidence type="ECO:0007829" key="9">
    <source>
        <dbReference type="PDB" id="8WAF"/>
    </source>
</evidence>
<evidence type="ECO:0007829" key="10">
    <source>
        <dbReference type="PDB" id="8WAG"/>
    </source>
</evidence>
<reference key="1">
    <citation type="journal article" date="2002" name="Nature">
        <title>Chloroplast avoidance movement reduces photodamage in plants.</title>
        <authorList>
            <person name="Kasahara M."/>
            <person name="Kagawa T."/>
            <person name="Oikawa K."/>
            <person name="Suetsugu N."/>
            <person name="Miyao M."/>
            <person name="Wada M."/>
        </authorList>
    </citation>
    <scope>NUCLEOTIDE SEQUENCE [MRNA]</scope>
    <scope>FUNCTION</scope>
</reference>
<reference key="2">
    <citation type="journal article" date="2003" name="Plant Cell">
        <title>Chloroplast unusual positioning1 is essential for proper chloroplast positioning.</title>
        <authorList>
            <person name="Oikawa K."/>
            <person name="Kasahara M."/>
            <person name="Kiyosue T."/>
            <person name="Kagawa T."/>
            <person name="Suetsugu N."/>
            <person name="Takahashi F."/>
            <person name="Kanegae T."/>
            <person name="Niwa Y."/>
            <person name="Kadota A."/>
            <person name="Wada M."/>
        </authorList>
    </citation>
    <scope>NUCLEOTIDE SEQUENCE [MRNA]</scope>
    <scope>FUNCTION</scope>
    <scope>DISRUPTION PHENOTYPE</scope>
    <scope>TISSUE SPECIFICITY</scope>
    <scope>SUBCELLULAR LOCATION</scope>
</reference>
<reference key="3">
    <citation type="journal article" date="2000" name="DNA Res.">
        <title>Structural analysis of Arabidopsis thaliana chromosome 3. II. Sequence features of the 4,251,695 bp regions covered by 90 P1, TAC and BAC clones.</title>
        <authorList>
            <person name="Kaneko T."/>
            <person name="Katoh T."/>
            <person name="Sato S."/>
            <person name="Nakamura Y."/>
            <person name="Asamizu E."/>
            <person name="Tabata S."/>
        </authorList>
    </citation>
    <scope>NUCLEOTIDE SEQUENCE [LARGE SCALE GENOMIC DNA]</scope>
    <source>
        <strain>cv. Columbia</strain>
    </source>
</reference>
<reference key="4">
    <citation type="journal article" date="2017" name="Plant J.">
        <title>Araport11: a complete reannotation of the Arabidopsis thaliana reference genome.</title>
        <authorList>
            <person name="Cheng C.Y."/>
            <person name="Krishnakumar V."/>
            <person name="Chan A.P."/>
            <person name="Thibaud-Nissen F."/>
            <person name="Schobel S."/>
            <person name="Town C.D."/>
        </authorList>
    </citation>
    <scope>GENOME REANNOTATION</scope>
    <source>
        <strain>cv. Columbia</strain>
    </source>
</reference>
<reference key="5">
    <citation type="journal article" date="2008" name="PLoS ONE">
        <title>Sorting signals, N-terminal modifications and abundance of the chloroplast proteome.</title>
        <authorList>
            <person name="Zybailov B."/>
            <person name="Rutschow H."/>
            <person name="Friso G."/>
            <person name="Rudella A."/>
            <person name="Emanuelsson O."/>
            <person name="Sun Q."/>
            <person name="van Wijk K.J."/>
        </authorList>
    </citation>
    <scope>IDENTIFICATION BY MASS SPECTROMETRY</scope>
    <scope>SUBCELLULAR LOCATION [LARGE SCALE ANALYSIS]</scope>
</reference>
<reference key="6">
    <citation type="journal article" date="2008" name="Planta">
        <title>The chloroplast outer membrane protein CHUP1 interacts with actin and profilin.</title>
        <authorList>
            <person name="Schmidt von Braun S."/>
            <person name="Schleiff E."/>
        </authorList>
    </citation>
    <scope>FUNCTION</scope>
    <scope>SUBCELLULAR LOCATION</scope>
</reference>
<reference key="7">
    <citation type="journal article" date="2008" name="Plant Physiol.">
        <title>Chloroplast outer envelope protein CHUP1 is essential for chloroplast anchorage to the plasma membrane and chloroplast movement.</title>
        <authorList>
            <person name="Oikawa K."/>
            <person name="Yamasato A."/>
            <person name="Kong S.-G."/>
            <person name="Kasahara M."/>
            <person name="Nakai M."/>
            <person name="Takahashi F."/>
            <person name="Ogura Y."/>
            <person name="Kagawa T."/>
            <person name="Wada M."/>
        </authorList>
    </citation>
    <scope>FUNCTION</scope>
    <scope>SUBCELLULAR LOCATION</scope>
    <scope>MUTAGENESIS OF ARG-4; SER-12 AND ARG-20</scope>
</reference>
<reference key="8">
    <citation type="journal article" date="2009" name="Plant Physiol.">
        <title>Large-scale Arabidopsis phosphoproteome profiling reveals novel chloroplast kinase substrates and phosphorylation networks.</title>
        <authorList>
            <person name="Reiland S."/>
            <person name="Messerli G."/>
            <person name="Baerenfaller K."/>
            <person name="Gerrits B."/>
            <person name="Endler A."/>
            <person name="Grossmann J."/>
            <person name="Gruissem W."/>
            <person name="Baginsky S."/>
        </authorList>
    </citation>
    <scope>PHOSPHORYLATION [LARGE SCALE ANALYSIS] AT SER-399</scope>
    <scope>IDENTIFICATION BY MASS SPECTROMETRY [LARGE SCALE ANALYSIS]</scope>
</reference>
<keyword id="KW-0002">3D-structure</keyword>
<keyword id="KW-0025">Alternative splicing</keyword>
<keyword id="KW-0150">Chloroplast</keyword>
<keyword id="KW-0175">Coiled coil</keyword>
<keyword id="KW-0472">Membrane</keyword>
<keyword id="KW-0597">Phosphoprotein</keyword>
<keyword id="KW-0934">Plastid</keyword>
<keyword id="KW-1002">Plastid outer membrane</keyword>
<keyword id="KW-1185">Reference proteome</keyword>
<keyword id="KW-0677">Repeat</keyword>
<comment type="function">
    <text evidence="3 4 5 7">Required for the positioning and movement of chloroplasts. Interacts with profilin and actin independent of its polymerization status. Regulates chloroplast localization by anchoring chloroplasts to the plasma membrane and forming a bridge to the actin cytoskeleton.</text>
</comment>
<comment type="subcellular location">
    <subcellularLocation>
        <location evidence="4 5 6 7">Plastid</location>
        <location evidence="4 5 6 7">Chloroplast outer membrane</location>
        <topology evidence="4 5 6 7">Peripheral membrane protein</topology>
        <orientation evidence="4 5 6 7">Cytoplasmic side</orientation>
    </subcellularLocation>
</comment>
<comment type="alternative products">
    <event type="alternative splicing"/>
    <isoform>
        <id>Q9LI74-1</id>
        <name>1</name>
        <sequence type="displayed"/>
    </isoform>
    <text>A number of isoforms are produced. According to EST sequences.</text>
</comment>
<comment type="tissue specificity">
    <text evidence="4">Expressed in cauline leaves, rosette leaves, stems and flowers, but not in roots.</text>
</comment>
<comment type="domain">
    <text>The N-terminal region (1-25) is necessary and sufficient for targeting and anchoring the protein in the chloroplast envelope membrane.</text>
</comment>
<comment type="domain">
    <text>The coiled coil domain(123-341) interacts with the plasma membrane and anchors chloroplasts firmly on the plasma membrane.</text>
</comment>
<comment type="domain">
    <text>The actin binding motif (346-356) can function in vitro as an actin binding site.</text>
</comment>
<comment type="domain">
    <text>The proline-rich domain (648-705) mediates the interaction with profilin.</text>
</comment>
<comment type="disruption phenotype">
    <text evidence="4">Defective in chloroplast photorelocation movement, leading to damage of the photosynthetic apparatus and subsequent bleaching of leaf color and necrosis under high light conditions. Chloroplasts gathered at the bottom of cells, regardless of the light conditions.</text>
</comment>
<name>CHUP1_ARATH</name>
<feature type="chain" id="PRO_0000378107" description="Protein CHUP1, chloroplastic">
    <location>
        <begin position="1"/>
        <end position="1004"/>
    </location>
</feature>
<feature type="region of interest" description="Required for chloroplast localization">
    <location>
        <begin position="1"/>
        <end position="25"/>
    </location>
</feature>
<feature type="region of interest" description="Disordered" evidence="2">
    <location>
        <begin position="22"/>
        <end position="63"/>
    </location>
</feature>
<feature type="region of interest" description="Leucine-zipper 1">
    <location>
        <begin position="269"/>
        <end position="290"/>
    </location>
</feature>
<feature type="region of interest" description="Disordered" evidence="2">
    <location>
        <begin position="398"/>
        <end position="482"/>
    </location>
</feature>
<feature type="region of interest" description="Disordered" evidence="2">
    <location>
        <begin position="504"/>
        <end position="536"/>
    </location>
</feature>
<feature type="region of interest" description="Disordered" evidence="2">
    <location>
        <begin position="612"/>
        <end position="718"/>
    </location>
</feature>
<feature type="region of interest" description="Disordered" evidence="2">
    <location>
        <begin position="736"/>
        <end position="755"/>
    </location>
</feature>
<feature type="region of interest" description="Leucine-zipper 2">
    <location>
        <begin position="802"/>
        <end position="823"/>
    </location>
</feature>
<feature type="region of interest" description="Disordered" evidence="2">
    <location>
        <begin position="979"/>
        <end position="1004"/>
    </location>
</feature>
<feature type="coiled-coil region" evidence="1">
    <location>
        <begin position="123"/>
        <end position="341"/>
    </location>
</feature>
<feature type="compositionally biased region" description="Polar residues" evidence="2">
    <location>
        <begin position="409"/>
        <end position="419"/>
    </location>
</feature>
<feature type="compositionally biased region" description="Low complexity" evidence="2">
    <location>
        <begin position="427"/>
        <end position="439"/>
    </location>
</feature>
<feature type="compositionally biased region" description="Polar residues" evidence="2">
    <location>
        <begin position="504"/>
        <end position="517"/>
    </location>
</feature>
<feature type="compositionally biased region" description="Polar residues" evidence="2">
    <location>
        <begin position="612"/>
        <end position="624"/>
    </location>
</feature>
<feature type="compositionally biased region" description="Pro residues" evidence="2">
    <location>
        <begin position="670"/>
        <end position="706"/>
    </location>
</feature>
<feature type="compositionally biased region" description="Polar residues" evidence="2">
    <location>
        <begin position="744"/>
        <end position="755"/>
    </location>
</feature>
<feature type="modified residue" description="Phosphoserine" evidence="8">
    <location>
        <position position="399"/>
    </location>
</feature>
<feature type="mutagenesis site" description="No effect on targeting. Loss of targeting; when associated with A-12 and/or A-20." evidence="7">
    <original>R</original>
    <variation>A</variation>
    <location>
        <position position="4"/>
    </location>
</feature>
<feature type="mutagenesis site" description="No effect on targeting. Loss of targeting; when associated with A-4 and/or A-20." evidence="7">
    <original>S</original>
    <variation>A</variation>
    <location>
        <position position="12"/>
    </location>
</feature>
<feature type="mutagenesis site" description="No effect on targeting. Loss of targeting; when associated with A-4 and/or A-12." evidence="7">
    <original>R</original>
    <variation>A</variation>
    <location>
        <position position="20"/>
    </location>
</feature>
<feature type="helix" evidence="10">
    <location>
        <begin position="721"/>
        <end position="729"/>
    </location>
</feature>
<feature type="helix" evidence="9">
    <location>
        <begin position="758"/>
        <end position="779"/>
    </location>
</feature>
<feature type="helix" evidence="9">
    <location>
        <begin position="781"/>
        <end position="793"/>
    </location>
</feature>
<feature type="helix" evidence="9">
    <location>
        <begin position="799"/>
        <end position="813"/>
    </location>
</feature>
<feature type="strand" evidence="10">
    <location>
        <begin position="816"/>
        <end position="818"/>
    </location>
</feature>
<feature type="helix" evidence="9">
    <location>
        <begin position="819"/>
        <end position="823"/>
    </location>
</feature>
<feature type="helix" evidence="9">
    <location>
        <begin position="830"/>
        <end position="854"/>
    </location>
</feature>
<feature type="helix" evidence="9">
    <location>
        <begin position="864"/>
        <end position="899"/>
    </location>
</feature>
<feature type="helix" evidence="9">
    <location>
        <begin position="904"/>
        <end position="906"/>
    </location>
</feature>
<feature type="turn" evidence="10">
    <location>
        <begin position="908"/>
        <end position="910"/>
    </location>
</feature>
<feature type="helix" evidence="9">
    <location>
        <begin position="911"/>
        <end position="936"/>
    </location>
</feature>
<feature type="helix" evidence="9">
    <location>
        <begin position="944"/>
        <end position="964"/>
    </location>
</feature>
<feature type="helix" evidence="9">
    <location>
        <begin position="969"/>
        <end position="979"/>
    </location>
</feature>
<accession>Q9LI74</accession>
<accession>A0A1I9LT47</accession>
<dbReference type="EMBL" id="AB087408">
    <property type="protein sequence ID" value="BAC55960.1"/>
    <property type="molecule type" value="mRNA"/>
</dbReference>
<dbReference type="EMBL" id="AP001313">
    <property type="protein sequence ID" value="BAB03089.1"/>
    <property type="molecule type" value="Genomic_DNA"/>
</dbReference>
<dbReference type="EMBL" id="CP002686">
    <property type="protein sequence ID" value="AEE77051.1"/>
    <property type="molecule type" value="Genomic_DNA"/>
</dbReference>
<dbReference type="EMBL" id="CP002686">
    <property type="protein sequence ID" value="AEE77052.1"/>
    <property type="molecule type" value="Genomic_DNA"/>
</dbReference>
<dbReference type="EMBL" id="CP002686">
    <property type="protein sequence ID" value="ANM65754.1"/>
    <property type="molecule type" value="Genomic_DNA"/>
</dbReference>
<dbReference type="EMBL" id="CP002686">
    <property type="protein sequence ID" value="ANM65755.1"/>
    <property type="molecule type" value="Genomic_DNA"/>
</dbReference>
<dbReference type="RefSeq" id="NP_001189974.1">
    <molecule id="Q9LI74-1"/>
    <property type="nucleotide sequence ID" value="NM_001203045.1"/>
</dbReference>
<dbReference type="RefSeq" id="NP_001327701.1">
    <molecule id="Q9LI74-1"/>
    <property type="nucleotide sequence ID" value="NM_001338763.1"/>
</dbReference>
<dbReference type="RefSeq" id="NP_001327702.1">
    <molecule id="Q9LI74-1"/>
    <property type="nucleotide sequence ID" value="NM_001338761.1"/>
</dbReference>
<dbReference type="RefSeq" id="NP_189197.2">
    <molecule id="Q9LI74-1"/>
    <property type="nucleotide sequence ID" value="NM_113468.5"/>
</dbReference>
<dbReference type="PDB" id="8WAF">
    <property type="method" value="X-ray"/>
    <property type="resolution" value="2.80 A"/>
    <property type="chains" value="A=757-982"/>
</dbReference>
<dbReference type="PDB" id="8WAG">
    <property type="method" value="X-ray"/>
    <property type="resolution" value="3.00 A"/>
    <property type="chains" value="A/B=716-982"/>
</dbReference>
<dbReference type="PDBsum" id="8WAF"/>
<dbReference type="PDBsum" id="8WAG"/>
<dbReference type="SMR" id="Q9LI74"/>
<dbReference type="BioGRID" id="7488">
    <property type="interactions" value="2"/>
</dbReference>
<dbReference type="FunCoup" id="Q9LI74">
    <property type="interactions" value="1510"/>
</dbReference>
<dbReference type="STRING" id="3702.Q9LI74"/>
<dbReference type="iPTMnet" id="Q9LI74"/>
<dbReference type="PaxDb" id="3702-AT3G25690.2"/>
<dbReference type="ProteomicsDB" id="246968">
    <molecule id="Q9LI74-1"/>
</dbReference>
<dbReference type="EnsemblPlants" id="AT3G25690.1">
    <molecule id="Q9LI74-1"/>
    <property type="protein sequence ID" value="AT3G25690.1"/>
    <property type="gene ID" value="AT3G25690"/>
</dbReference>
<dbReference type="EnsemblPlants" id="AT3G25690.2">
    <molecule id="Q9LI74-1"/>
    <property type="protein sequence ID" value="AT3G25690.2"/>
    <property type="gene ID" value="AT3G25690"/>
</dbReference>
<dbReference type="EnsemblPlants" id="AT3G25690.4">
    <molecule id="Q9LI74-1"/>
    <property type="protein sequence ID" value="AT3G25690.4"/>
    <property type="gene ID" value="AT3G25690"/>
</dbReference>
<dbReference type="EnsemblPlants" id="AT3G25690.6">
    <molecule id="Q9LI74-1"/>
    <property type="protein sequence ID" value="AT3G25690.6"/>
    <property type="gene ID" value="AT3G25690"/>
</dbReference>
<dbReference type="GeneID" id="822157"/>
<dbReference type="Gramene" id="AT3G25690.1">
    <molecule id="Q9LI74-1"/>
    <property type="protein sequence ID" value="AT3G25690.1"/>
    <property type="gene ID" value="AT3G25690"/>
</dbReference>
<dbReference type="Gramene" id="AT3G25690.2">
    <molecule id="Q9LI74-1"/>
    <property type="protein sequence ID" value="AT3G25690.2"/>
    <property type="gene ID" value="AT3G25690"/>
</dbReference>
<dbReference type="Gramene" id="AT3G25690.4">
    <molecule id="Q9LI74-1"/>
    <property type="protein sequence ID" value="AT3G25690.4"/>
    <property type="gene ID" value="AT3G25690"/>
</dbReference>
<dbReference type="Gramene" id="AT3G25690.6">
    <molecule id="Q9LI74-1"/>
    <property type="protein sequence ID" value="AT3G25690.6"/>
    <property type="gene ID" value="AT3G25690"/>
</dbReference>
<dbReference type="KEGG" id="ath:AT3G25690"/>
<dbReference type="Araport" id="AT3G25690"/>
<dbReference type="TAIR" id="AT3G25690">
    <property type="gene designation" value="CHUP1"/>
</dbReference>
<dbReference type="eggNOG" id="ENOG502QQ13">
    <property type="taxonomic scope" value="Eukaryota"/>
</dbReference>
<dbReference type="InParanoid" id="Q9LI74"/>
<dbReference type="PhylomeDB" id="Q9LI74"/>
<dbReference type="PRO" id="PR:Q9LI74"/>
<dbReference type="Proteomes" id="UP000006548">
    <property type="component" value="Chromosome 3"/>
</dbReference>
<dbReference type="ExpressionAtlas" id="Q9LI74">
    <property type="expression patterns" value="baseline and differential"/>
</dbReference>
<dbReference type="GO" id="GO:0009507">
    <property type="term" value="C:chloroplast"/>
    <property type="evidence" value="ECO:0007005"/>
    <property type="project" value="TAIR"/>
</dbReference>
<dbReference type="GO" id="GO:0009707">
    <property type="term" value="C:chloroplast outer membrane"/>
    <property type="evidence" value="ECO:0000314"/>
    <property type="project" value="TAIR"/>
</dbReference>
<dbReference type="GO" id="GO:0005829">
    <property type="term" value="C:cytosol"/>
    <property type="evidence" value="ECO:0007005"/>
    <property type="project" value="TAIR"/>
</dbReference>
<dbReference type="GO" id="GO:0009902">
    <property type="term" value="P:chloroplast relocation"/>
    <property type="evidence" value="ECO:0000315"/>
    <property type="project" value="TAIR"/>
</dbReference>
<dbReference type="InterPro" id="IPR040265">
    <property type="entry name" value="CHUP1/IPGA1-like"/>
</dbReference>
<dbReference type="PANTHER" id="PTHR31342">
    <property type="entry name" value="PROTEIN CHUP1, CHLOROPLASTIC"/>
    <property type="match status" value="1"/>
</dbReference>
<dbReference type="PANTHER" id="PTHR31342:SF7">
    <property type="entry name" value="PROTEIN CHUP1, CHLOROPLASTIC"/>
    <property type="match status" value="1"/>
</dbReference>
<organism>
    <name type="scientific">Arabidopsis thaliana</name>
    <name type="common">Mouse-ear cress</name>
    <dbReference type="NCBI Taxonomy" id="3702"/>
    <lineage>
        <taxon>Eukaryota</taxon>
        <taxon>Viridiplantae</taxon>
        <taxon>Streptophyta</taxon>
        <taxon>Embryophyta</taxon>
        <taxon>Tracheophyta</taxon>
        <taxon>Spermatophyta</taxon>
        <taxon>Magnoliopsida</taxon>
        <taxon>eudicotyledons</taxon>
        <taxon>Gunneridae</taxon>
        <taxon>Pentapetalae</taxon>
        <taxon>rosids</taxon>
        <taxon>malvids</taxon>
        <taxon>Brassicales</taxon>
        <taxon>Brassicaceae</taxon>
        <taxon>Camelineae</taxon>
        <taxon>Arabidopsis</taxon>
    </lineage>
</organism>
<gene>
    <name type="primary">CHUP1</name>
    <name type="ordered locus">At3g25690</name>
    <name type="ORF">T5M7.14</name>
</gene>